<protein>
    <recommendedName>
        <fullName evidence="1">UPF0173 metal-dependent hydrolase NEQ378</fullName>
    </recommendedName>
</protein>
<name>Y378_NANEQ</name>
<gene>
    <name type="ordered locus">NEQ378</name>
</gene>
<organism>
    <name type="scientific">Nanoarchaeum equitans (strain Kin4-M)</name>
    <dbReference type="NCBI Taxonomy" id="228908"/>
    <lineage>
        <taxon>Archaea</taxon>
        <taxon>Nanobdellota</taxon>
        <taxon>Candidatus Nanoarchaeia</taxon>
        <taxon>Nanoarchaeales</taxon>
        <taxon>Nanoarchaeaceae</taxon>
        <taxon>Nanoarchaeum</taxon>
    </lineage>
</organism>
<evidence type="ECO:0000255" key="1">
    <source>
        <dbReference type="HAMAP-Rule" id="MF_00457"/>
    </source>
</evidence>
<reference key="1">
    <citation type="journal article" date="2003" name="Proc. Natl. Acad. Sci. U.S.A.">
        <title>The genome of Nanoarchaeum equitans: insights into early archaeal evolution and derived parasitism.</title>
        <authorList>
            <person name="Waters E."/>
            <person name="Hohn M.J."/>
            <person name="Ahel I."/>
            <person name="Graham D.E."/>
            <person name="Adams M.D."/>
            <person name="Barnstead M."/>
            <person name="Beeson K.Y."/>
            <person name="Bibbs L."/>
            <person name="Bolanos R."/>
            <person name="Keller M."/>
            <person name="Kretz K."/>
            <person name="Lin X."/>
            <person name="Mathur E."/>
            <person name="Ni J."/>
            <person name="Podar M."/>
            <person name="Richardson T."/>
            <person name="Sutton G.G."/>
            <person name="Simon M."/>
            <person name="Soell D."/>
            <person name="Stetter K.O."/>
            <person name="Short J.M."/>
            <person name="Noorderwier M."/>
        </authorList>
    </citation>
    <scope>NUCLEOTIDE SEQUENCE [LARGE SCALE GENOMIC DNA]</scope>
    <source>
        <strain>Kin4-M</strain>
    </source>
</reference>
<feature type="chain" id="PRO_0000367236" description="UPF0173 metal-dependent hydrolase NEQ378">
    <location>
        <begin position="1"/>
        <end position="215"/>
    </location>
</feature>
<keyword id="KW-0378">Hydrolase</keyword>
<keyword id="KW-1185">Reference proteome</keyword>
<sequence length="215" mass="24179">MKIKYMGHSAFIIEHKNRLIIDPYIETIPEVDYVLVTHAHNDHFGNTIEIAKKNNAKVISIYEIAEFVKQFNIESIGMNFGGTIDIGEKVSLVPAVHSSTLYYNGKAYPLGNPGGFVIKGNKTIYHAGDTMVFKDMELIGELFKIDVALLPIGGVFTMDIDQALKAIDLLKPKIVIPMHYNTWPIIKADPYEFKRKAEEKGVEAIVLNKDEEIDL</sequence>
<accession>Q74N11</accession>
<proteinExistence type="inferred from homology"/>
<comment type="similarity">
    <text evidence="1">Belongs to the UPF0173 family.</text>
</comment>
<dbReference type="EMBL" id="AE017199">
    <property type="protein sequence ID" value="AAR39226.1"/>
    <property type="molecule type" value="Genomic_DNA"/>
</dbReference>
<dbReference type="SMR" id="Q74N11"/>
<dbReference type="STRING" id="228908.NEQ378"/>
<dbReference type="EnsemblBacteria" id="AAR39226">
    <property type="protein sequence ID" value="AAR39226"/>
    <property type="gene ID" value="NEQ378"/>
</dbReference>
<dbReference type="KEGG" id="neq:NEQ378"/>
<dbReference type="HOGENOM" id="CLU_070010_4_0_2"/>
<dbReference type="BioCyc" id="NEQU228908:GJB6-406-MONOMER"/>
<dbReference type="Proteomes" id="UP000000578">
    <property type="component" value="Chromosome"/>
</dbReference>
<dbReference type="GO" id="GO:0016787">
    <property type="term" value="F:hydrolase activity"/>
    <property type="evidence" value="ECO:0007669"/>
    <property type="project" value="UniProtKB-UniRule"/>
</dbReference>
<dbReference type="Gene3D" id="3.60.15.10">
    <property type="entry name" value="Ribonuclease Z/Hydroxyacylglutathione hydrolase-like"/>
    <property type="match status" value="1"/>
</dbReference>
<dbReference type="HAMAP" id="MF_00457">
    <property type="entry name" value="UPF0173"/>
    <property type="match status" value="1"/>
</dbReference>
<dbReference type="InterPro" id="IPR001279">
    <property type="entry name" value="Metallo-B-lactamas"/>
</dbReference>
<dbReference type="InterPro" id="IPR036866">
    <property type="entry name" value="RibonucZ/Hydroxyglut_hydro"/>
</dbReference>
<dbReference type="InterPro" id="IPR022877">
    <property type="entry name" value="UPF0173"/>
</dbReference>
<dbReference type="InterPro" id="IPR050114">
    <property type="entry name" value="UPF0173_UPF0282_UlaG_hydrolase"/>
</dbReference>
<dbReference type="NCBIfam" id="NF001911">
    <property type="entry name" value="PRK00685.1"/>
    <property type="match status" value="1"/>
</dbReference>
<dbReference type="PANTHER" id="PTHR43546:SF3">
    <property type="entry name" value="UPF0173 METAL-DEPENDENT HYDROLASE MJ1163"/>
    <property type="match status" value="1"/>
</dbReference>
<dbReference type="PANTHER" id="PTHR43546">
    <property type="entry name" value="UPF0173 METAL-DEPENDENT HYDROLASE MJ1163-RELATED"/>
    <property type="match status" value="1"/>
</dbReference>
<dbReference type="Pfam" id="PF12706">
    <property type="entry name" value="Lactamase_B_2"/>
    <property type="match status" value="1"/>
</dbReference>
<dbReference type="SMART" id="SM00849">
    <property type="entry name" value="Lactamase_B"/>
    <property type="match status" value="1"/>
</dbReference>
<dbReference type="SUPFAM" id="SSF56281">
    <property type="entry name" value="Metallo-hydrolase/oxidoreductase"/>
    <property type="match status" value="1"/>
</dbReference>